<organism>
    <name type="scientific">Francisella tularensis subsp. holarctica (strain LVS)</name>
    <dbReference type="NCBI Taxonomy" id="376619"/>
    <lineage>
        <taxon>Bacteria</taxon>
        <taxon>Pseudomonadati</taxon>
        <taxon>Pseudomonadota</taxon>
        <taxon>Gammaproteobacteria</taxon>
        <taxon>Thiotrichales</taxon>
        <taxon>Francisellaceae</taxon>
        <taxon>Francisella</taxon>
    </lineage>
</organism>
<name>RL14_FRATH</name>
<feature type="chain" id="PRO_0000266483" description="Large ribosomal subunit protein uL14">
    <location>
        <begin position="1"/>
        <end position="122"/>
    </location>
</feature>
<reference key="1">
    <citation type="submission" date="2006-03" db="EMBL/GenBank/DDBJ databases">
        <title>Complete genome sequence of Francisella tularensis LVS (Live Vaccine Strain).</title>
        <authorList>
            <person name="Chain P."/>
            <person name="Larimer F."/>
            <person name="Land M."/>
            <person name="Stilwagen S."/>
            <person name="Larsson P."/>
            <person name="Bearden S."/>
            <person name="Chu M."/>
            <person name="Oyston P."/>
            <person name="Forsman M."/>
            <person name="Andersson S."/>
            <person name="Lindler L."/>
            <person name="Titball R."/>
            <person name="Garcia E."/>
        </authorList>
    </citation>
    <scope>NUCLEOTIDE SEQUENCE [LARGE SCALE GENOMIC DNA]</scope>
    <source>
        <strain>LVS</strain>
    </source>
</reference>
<gene>
    <name evidence="1" type="primary">rplN</name>
    <name type="ordered locus">FTL_0246</name>
</gene>
<comment type="function">
    <text evidence="1">Binds to 23S rRNA. Forms part of two intersubunit bridges in the 70S ribosome.</text>
</comment>
<comment type="subunit">
    <text evidence="1">Part of the 50S ribosomal subunit. Forms a cluster with proteins L3 and L19. In the 70S ribosome, L14 and L19 interact and together make contacts with the 16S rRNA in bridges B5 and B8.</text>
</comment>
<comment type="similarity">
    <text evidence="1">Belongs to the universal ribosomal protein uL14 family.</text>
</comment>
<protein>
    <recommendedName>
        <fullName evidence="1">Large ribosomal subunit protein uL14</fullName>
    </recommendedName>
    <alternativeName>
        <fullName evidence="2">50S ribosomal protein L14</fullName>
    </alternativeName>
</protein>
<evidence type="ECO:0000255" key="1">
    <source>
        <dbReference type="HAMAP-Rule" id="MF_01367"/>
    </source>
</evidence>
<evidence type="ECO:0000305" key="2"/>
<accession>Q2A5G0</accession>
<sequence>MIQMQTELQVADNSGAKRVECIKVLGGSHRRYASIGDVIKVTVKEASPRGKAKKGSVYNAVVVRTAKGVRRKDGSKVRFDGNAAVLLNANGQPIGTRIFGPVTRELRTEKFMKIVSLAPEVL</sequence>
<dbReference type="EMBL" id="AM233362">
    <property type="protein sequence ID" value="CAJ78687.1"/>
    <property type="molecule type" value="Genomic_DNA"/>
</dbReference>
<dbReference type="RefSeq" id="WP_003014346.1">
    <property type="nucleotide sequence ID" value="NZ_CP009694.1"/>
</dbReference>
<dbReference type="SMR" id="Q2A5G0"/>
<dbReference type="GeneID" id="75264251"/>
<dbReference type="KEGG" id="ftl:FTL_0246"/>
<dbReference type="Proteomes" id="UP000001944">
    <property type="component" value="Chromosome"/>
</dbReference>
<dbReference type="GO" id="GO:0022625">
    <property type="term" value="C:cytosolic large ribosomal subunit"/>
    <property type="evidence" value="ECO:0007669"/>
    <property type="project" value="TreeGrafter"/>
</dbReference>
<dbReference type="GO" id="GO:0070180">
    <property type="term" value="F:large ribosomal subunit rRNA binding"/>
    <property type="evidence" value="ECO:0007669"/>
    <property type="project" value="TreeGrafter"/>
</dbReference>
<dbReference type="GO" id="GO:0003735">
    <property type="term" value="F:structural constituent of ribosome"/>
    <property type="evidence" value="ECO:0007669"/>
    <property type="project" value="InterPro"/>
</dbReference>
<dbReference type="GO" id="GO:0006412">
    <property type="term" value="P:translation"/>
    <property type="evidence" value="ECO:0007669"/>
    <property type="project" value="UniProtKB-UniRule"/>
</dbReference>
<dbReference type="CDD" id="cd00337">
    <property type="entry name" value="Ribosomal_uL14"/>
    <property type="match status" value="1"/>
</dbReference>
<dbReference type="FunFam" id="2.40.150.20:FF:000001">
    <property type="entry name" value="50S ribosomal protein L14"/>
    <property type="match status" value="1"/>
</dbReference>
<dbReference type="Gene3D" id="2.40.150.20">
    <property type="entry name" value="Ribosomal protein L14"/>
    <property type="match status" value="1"/>
</dbReference>
<dbReference type="HAMAP" id="MF_01367">
    <property type="entry name" value="Ribosomal_uL14"/>
    <property type="match status" value="1"/>
</dbReference>
<dbReference type="InterPro" id="IPR000218">
    <property type="entry name" value="Ribosomal_uL14"/>
</dbReference>
<dbReference type="InterPro" id="IPR005745">
    <property type="entry name" value="Ribosomal_uL14_bac-type"/>
</dbReference>
<dbReference type="InterPro" id="IPR019972">
    <property type="entry name" value="Ribosomal_uL14_CS"/>
</dbReference>
<dbReference type="InterPro" id="IPR036853">
    <property type="entry name" value="Ribosomal_uL14_sf"/>
</dbReference>
<dbReference type="NCBIfam" id="TIGR01067">
    <property type="entry name" value="rplN_bact"/>
    <property type="match status" value="1"/>
</dbReference>
<dbReference type="PANTHER" id="PTHR11761">
    <property type="entry name" value="50S/60S RIBOSOMAL PROTEIN L14/L23"/>
    <property type="match status" value="1"/>
</dbReference>
<dbReference type="PANTHER" id="PTHR11761:SF3">
    <property type="entry name" value="LARGE RIBOSOMAL SUBUNIT PROTEIN UL14M"/>
    <property type="match status" value="1"/>
</dbReference>
<dbReference type="Pfam" id="PF00238">
    <property type="entry name" value="Ribosomal_L14"/>
    <property type="match status" value="1"/>
</dbReference>
<dbReference type="SMART" id="SM01374">
    <property type="entry name" value="Ribosomal_L14"/>
    <property type="match status" value="1"/>
</dbReference>
<dbReference type="SUPFAM" id="SSF50193">
    <property type="entry name" value="Ribosomal protein L14"/>
    <property type="match status" value="1"/>
</dbReference>
<dbReference type="PROSITE" id="PS00049">
    <property type="entry name" value="RIBOSOMAL_L14"/>
    <property type="match status" value="1"/>
</dbReference>
<proteinExistence type="inferred from homology"/>
<keyword id="KW-1185">Reference proteome</keyword>
<keyword id="KW-0687">Ribonucleoprotein</keyword>
<keyword id="KW-0689">Ribosomal protein</keyword>
<keyword id="KW-0694">RNA-binding</keyword>
<keyword id="KW-0699">rRNA-binding</keyword>